<name>CDK7_HUMAN</name>
<proteinExistence type="evidence at protein level"/>
<reference key="1">
    <citation type="journal article" date="1994" name="J. Cell Biol.">
        <title>Cell cycle analysis of the activity, subcellular localization, and subunit composition of human CAK (CDK-activating kinase).</title>
        <authorList>
            <person name="Tassan J.-P."/>
            <person name="Schultz S.J."/>
            <person name="Bartek J."/>
            <person name="Nigg E.A."/>
        </authorList>
    </citation>
    <scope>NUCLEOTIDE SEQUENCE [MRNA]</scope>
    <source>
        <tissue>Placenta</tissue>
    </source>
</reference>
<reference key="2">
    <citation type="journal article" date="1994" name="Oncogene">
        <title>Two novel human serine/threonine kinases with homologies to the cell cycle regulating Xenopus MO15, and NIMA kinases: cloning and characterization of their expression pattern.</title>
        <authorList>
            <person name="Levedakou E.N."/>
            <person name="He M."/>
            <person name="Baptist E.W."/>
            <person name="Craven R.J."/>
            <person name="Cance W.G."/>
            <person name="Welcsh P.L."/>
            <person name="Simmons A."/>
            <person name="Naylor S.L."/>
            <person name="Leach R.J."/>
            <person name="Lewis T.B."/>
            <person name="Bowcock A."/>
            <person name="Liu E.T."/>
        </authorList>
    </citation>
    <scope>NUCLEOTIDE SEQUENCE [MRNA]</scope>
    <source>
        <tissue>Mammary gland</tissue>
    </source>
</reference>
<reference key="3">
    <citation type="journal article" date="1994" name="Oncogene">
        <title>Cloning, expression and subcellular localization of the human homolog of p40MO15 catalytic subunit of cdk-activating kinase.</title>
        <authorList>
            <person name="Darbon J.-M."/>
            <person name="Devault A."/>
            <person name="Taviaux S."/>
            <person name="Fesquet D."/>
            <person name="Martinez A.-M."/>
            <person name="Galas S."/>
            <person name="Cavadore J.-C."/>
            <person name="Doree M."/>
            <person name="Blanchard J.-M."/>
        </authorList>
    </citation>
    <scope>NUCLEOTIDE SEQUENCE [MRNA]</scope>
</reference>
<reference key="4">
    <citation type="journal article" date="1994" name="Oncogene">
        <title>Molecular cloning of the human CAK1 gene encoding a cyclin-dependent kinase-activating kinase.</title>
        <authorList>
            <person name="Wu L."/>
            <person name="Yee A."/>
            <person name="Liu L."/>
            <person name="Carbonaro-Hall D."/>
            <person name="Venkatesan N."/>
            <person name="Tolo T."/>
            <person name="Hall F.L."/>
        </authorList>
    </citation>
    <scope>NUCLEOTIDE SEQUENCE [MRNA]</scope>
    <source>
        <tissue>Fibroblast</tissue>
    </source>
</reference>
<reference key="5">
    <citation type="journal article" date="1994" name="Oncol. Rep.">
        <title>Human and Xenopus MO15 mRNA are highly conserved but show different patterns of expression in adult tissues.</title>
        <authorList>
            <person name="Kobelt D."/>
            <person name="Karn T."/>
            <person name="Hock B."/>
            <person name="Holtrich U."/>
            <person name="Braeuninger A."/>
            <person name="Wolf G."/>
            <person name="Strebhardt K."/>
            <person name="Ruebsamen-Waigmann H."/>
        </authorList>
    </citation>
    <scope>NUCLEOTIDE SEQUENCE [MRNA]</scope>
    <source>
        <tissue>Lung</tissue>
        <tissue>Thymus</tissue>
    </source>
</reference>
<reference key="6">
    <citation type="submission" date="2002-07" db="EMBL/GenBank/DDBJ databases">
        <authorList>
            <consortium name="NIEHS SNPs program"/>
        </authorList>
    </citation>
    <scope>NUCLEOTIDE SEQUENCE [GENOMIC DNA]</scope>
    <scope>VARIANTS ALA-163 AND MET-285</scope>
</reference>
<reference key="7">
    <citation type="journal article" date="2004" name="Genome Res.">
        <title>The status, quality, and expansion of the NIH full-length cDNA project: the Mammalian Gene Collection (MGC).</title>
        <authorList>
            <consortium name="The MGC Project Team"/>
        </authorList>
    </citation>
    <scope>NUCLEOTIDE SEQUENCE [LARGE SCALE MRNA]</scope>
    <source>
        <tissue>Cervix</tissue>
        <tissue>Urinary bladder</tissue>
    </source>
</reference>
<reference key="8">
    <citation type="journal article" date="1994" name="Cell">
        <title>A novel cyclin associates with MO15/CDK7 to form the CDK-activating kinase.</title>
        <authorList>
            <person name="Fisher R.P."/>
            <person name="Morgan D.O."/>
        </authorList>
    </citation>
    <scope>MUTAGENESIS OF THR-170</scope>
</reference>
<reference key="9">
    <citation type="journal article" date="1997" name="Mol. Cell. Biol.">
        <title>p53 is phosphorylated by CDK7-cyclin H in a p36MAT1-dependent manner.</title>
        <authorList>
            <person name="Ko L.J."/>
            <person name="Shieh S.-Y."/>
            <person name="Chen X."/>
            <person name="Jayaraman L."/>
            <person name="Tamai K."/>
            <person name="Taya Y."/>
            <person name="Prives C."/>
            <person name="Pan Z.-Q."/>
        </authorList>
    </citation>
    <scope>FUNCTION AS TP53 KINASE</scope>
</reference>
<reference key="10">
    <citation type="journal article" date="1998" name="Genes Dev.">
        <title>The molecular mechanism of mitotic inhibition of TFIIH is mediated by phosphorylation of CDK7.</title>
        <authorList>
            <person name="Akoulitchev S."/>
            <person name="Reinberg D."/>
        </authorList>
    </citation>
    <scope>PHOSPHORYLATION AT SER-164 AND THR-170</scope>
    <scope>MUTAGENESIS OF SER-164 AND THR-170</scope>
</reference>
<reference key="11">
    <citation type="journal article" date="1998" name="J. Biol. Chem.">
        <title>Immunoaffinity purification and functional characterization of human transcription factor IIH and RNA polymerase II from clonal cell lines that conditionally express epitope-tagged subunits of the multiprotein complexes.</title>
        <authorList>
            <person name="Kershnar E."/>
            <person name="Wu S.-Y."/>
            <person name="Chiang C.-M."/>
        </authorList>
    </citation>
    <scope>IDENTIFICATION IN THE TFIIH BASAL TRANSCRIPTION FACTOR</scope>
    <scope>FUNCTION</scope>
    <scope>CATALYTIC ACTIVITY</scope>
</reference>
<reference key="12">
    <citation type="journal article" date="1998" name="Oncogene">
        <title>Regulation of CAK kinase activity by p53.</title>
        <authorList>
            <person name="Schneider E."/>
            <person name="Montenarh M."/>
            <person name="Wagner P."/>
        </authorList>
    </citation>
    <scope>FUNCTION AS CDK2 KINASE</scope>
    <scope>IDENTIFICATION IN COMPLEX WITH TP53</scope>
    <scope>ACTIVITY REGULATION</scope>
</reference>
<reference key="13">
    <citation type="journal article" date="1999" name="Mol. Cell">
        <title>Reconstitution of the transcription factor TFIIH: assignment of functions for the three enzymatic subunits, XPB, XPD, and cdk7.</title>
        <authorList>
            <person name="Tirode F."/>
            <person name="Busso D."/>
            <person name="Coin F."/>
            <person name="Egly J.-M."/>
        </authorList>
    </citation>
    <scope>FUNCTION</scope>
</reference>
<reference key="14">
    <citation type="journal article" date="2000" name="J. Biol. Chem.">
        <title>Interactions of Cdk7 and Kin28 with Hint/PKCI-1 and Hnt1 histidine triad proteins.</title>
        <authorList>
            <person name="Korsisaari N."/>
            <person name="Makela T.P."/>
        </authorList>
    </citation>
    <scope>INTERACTION WITH HINTI</scope>
    <scope>MUTAGENESIS OF LYS-41 AND THR-170</scope>
    <scope>SUBCELLULAR LOCATION</scope>
</reference>
<reference key="15">
    <citation type="journal article" date="2000" name="Mol. Cell">
        <title>The FBP interacting repressor targets TFIIH to inhibit activated transcription.</title>
        <authorList>
            <person name="Liu J."/>
            <person name="He L."/>
            <person name="Collins I."/>
            <person name="Ge H."/>
            <person name="Libutti D."/>
            <person name="Li J."/>
            <person name="Egly J.-M."/>
            <person name="Levens D."/>
        </authorList>
    </citation>
    <scope>INTERACTION WITH PUF60</scope>
</reference>
<reference key="16">
    <citation type="journal article" date="2001" name="Mol. Cell. Biol.">
        <title>Reciprocal activation by cyclin-dependent kinases 2 and 7 is directed by substrate specificity determinants outside the T loop.</title>
        <authorList>
            <person name="Garrett S."/>
            <person name="Barton W.A."/>
            <person name="Knights R."/>
            <person name="Jin P."/>
            <person name="Morgan D.O."/>
            <person name="Fisher R.P."/>
        </authorList>
    </citation>
    <scope>PHOSPHORYLATION AT SER-164 AND THR-170 BY CDK2</scope>
    <scope>FUNCTION AS CDK2 KINASE</scope>
</reference>
<reference key="17">
    <citation type="journal article" date="2005" name="Tissue Cell">
        <title>Cyclin-dependent kinase activating kinase/Cdk7 co-localizes with PKC-iota in human glioma cells.</title>
        <authorList>
            <person name="Bicaku E."/>
            <person name="Patel R."/>
            <person name="Acevedo-Duncan M."/>
        </authorList>
    </citation>
    <scope>INTERACTION WITH PRKCI</scope>
    <scope>SUBCELLULAR LOCATION</scope>
</reference>
<reference key="18">
    <citation type="journal article" date="2006" name="Nat. Struct. Mol. Biol.">
        <title>Dichotomous but stringent substrate selection by the dual-function Cdk7 complex revealed by chemical genetics.</title>
        <authorList>
            <person name="Larochelle S."/>
            <person name="Batliner J."/>
            <person name="Gamble M.J."/>
            <person name="Barboza N.M."/>
            <person name="Kraybill B.C."/>
            <person name="Blethrow J.D."/>
            <person name="Shokat K.M."/>
            <person name="Fisher R.P."/>
        </authorList>
    </citation>
    <scope>FUNCTION AS SPT5/SUPT5H AND CDK KINASE</scope>
    <scope>MUTAGENESIS OF PHE-91</scope>
    <scope>IDENTIFICATION IN CAK COMPLEX</scope>
</reference>
<reference key="19">
    <citation type="journal article" date="2007" name="Mol. Cell">
        <title>Requirements for Cdk7 in the assembly of Cdk1/cyclin B and activation of Cdk2 revealed by chemical genetics in human cells.</title>
        <authorList>
            <person name="Larochelle S."/>
            <person name="Merrick K.A."/>
            <person name="Terret M.-E."/>
            <person name="Wohlbold L."/>
            <person name="Barboza N.M."/>
            <person name="Zhang C."/>
            <person name="Shokat K.M."/>
            <person name="Jallepalli P.V."/>
            <person name="Fisher R.P."/>
        </authorList>
    </citation>
    <scope>FUNCTION IN CELL CYCLE REGULATION</scope>
</reference>
<reference key="20">
    <citation type="journal article" date="2007" name="Proteins">
        <title>Recognition of Cdk2 by Cdk7.</title>
        <authorList>
            <person name="Lolli G."/>
            <person name="Johnson L.N."/>
        </authorList>
    </citation>
    <scope>FUNCTION AS CDK2 KINASE</scope>
    <scope>INTERACTION WITH CDK2</scope>
</reference>
<reference key="21">
    <citation type="journal article" date="2008" name="J. Proteome Res.">
        <title>Combining protein-based IMAC, peptide-based IMAC, and MudPIT for efficient phosphoproteomic analysis.</title>
        <authorList>
            <person name="Cantin G.T."/>
            <person name="Yi W."/>
            <person name="Lu B."/>
            <person name="Park S.K."/>
            <person name="Xu T."/>
            <person name="Lee J.-D."/>
            <person name="Yates J.R. III"/>
        </authorList>
    </citation>
    <scope>IDENTIFICATION BY MASS SPECTROMETRY [LARGE SCALE ANALYSIS]</scope>
    <source>
        <tissue>Cervix carcinoma</tissue>
    </source>
</reference>
<reference key="22">
    <citation type="journal article" date="2008" name="Mol. Cell">
        <title>Kinase-selective enrichment enables quantitative phosphoproteomics of the kinome across the cell cycle.</title>
        <authorList>
            <person name="Daub H."/>
            <person name="Olsen J.V."/>
            <person name="Bairlein M."/>
            <person name="Gnad F."/>
            <person name="Oppermann F.S."/>
            <person name="Korner R."/>
            <person name="Greff Z."/>
            <person name="Keri G."/>
            <person name="Stemmann O."/>
            <person name="Mann M."/>
        </authorList>
    </citation>
    <scope>PHOSPHORYLATION [LARGE SCALE ANALYSIS] AT SER-7; SER-164 AND SER-321</scope>
    <scope>IDENTIFICATION BY MASS SPECTROMETRY [LARGE SCALE ANALYSIS]</scope>
    <source>
        <tissue>Cervix carcinoma</tissue>
    </source>
</reference>
<reference key="23">
    <citation type="journal article" date="2008" name="Mol. Endocrinol.">
        <title>Phosphorylation of steroidogenic factor 1 is mediated by cyclin-dependent kinase 7.</title>
        <authorList>
            <person name="Lewis A.E."/>
            <person name="Rusten M."/>
            <person name="Hoivik E.A."/>
            <person name="Vikse E.L."/>
            <person name="Hansson M.L."/>
            <person name="Wallberg A.E."/>
            <person name="Bakke M."/>
        </authorList>
    </citation>
    <scope>FUNCTION AS SF1/NR5A1 KINASE</scope>
    <scope>INTERACTION WITH SF1/NR5A1</scope>
</reference>
<reference key="24">
    <citation type="journal article" date="2008" name="Proc. Natl. Acad. Sci. U.S.A.">
        <title>A quantitative atlas of mitotic phosphorylation.</title>
        <authorList>
            <person name="Dephoure N."/>
            <person name="Zhou C."/>
            <person name="Villen J."/>
            <person name="Beausoleil S.A."/>
            <person name="Bakalarski C.E."/>
            <person name="Elledge S.J."/>
            <person name="Gygi S.P."/>
        </authorList>
    </citation>
    <scope>PHOSPHORYLATION [LARGE SCALE ANALYSIS] AT SER-164 AND THR-170</scope>
    <scope>IDENTIFICATION BY MASS SPECTROMETRY [LARGE SCALE ANALYSIS]</scope>
    <source>
        <tissue>Cervix carcinoma</tissue>
    </source>
</reference>
<reference key="25">
    <citation type="journal article" date="2009" name="Mol. Cell">
        <title>TFIIH kinase places bivalent marks on the carboxy-terminal domain of RNA polymerase II.</title>
        <authorList>
            <person name="Akhtar M.S."/>
            <person name="Heidemann M."/>
            <person name="Tietjen J.R."/>
            <person name="Zhang D.W."/>
            <person name="Chapman R.D."/>
            <person name="Eick D."/>
            <person name="Ansari A.Z."/>
        </authorList>
    </citation>
    <scope>FUNCTION AS POLR2A CTD KINASE</scope>
</reference>
<reference key="26">
    <citation type="journal article" date="2009" name="Mol. Cell. Biol.">
        <title>SUMOylation inhibits SF-1 activity by reducing CDK7-mediated serine 203 phosphorylation.</title>
        <authorList>
            <person name="Yang W.-H."/>
            <person name="Heaton J.H."/>
            <person name="Brevig H."/>
            <person name="Mukherjee S."/>
            <person name="Iniguez-Lluhi J.A."/>
            <person name="Hammer G.D."/>
        </authorList>
    </citation>
    <scope>FUNCTION AS SF1/NR5A1 KINASE</scope>
</reference>
<reference key="27">
    <citation type="journal article" date="2009" name="Mol. Cell. Biol.">
        <title>TFIIH-associated Cdk7 kinase functions in phosphorylation of C-terminal domain Ser7 residues, promoter-proximal pausing, and termination by RNA polymerase II.</title>
        <authorList>
            <person name="Glover-Cutter K."/>
            <person name="Larochelle S."/>
            <person name="Erickson B."/>
            <person name="Zhang C."/>
            <person name="Shokat K."/>
            <person name="Fisher R.P."/>
            <person name="Bentley D.L."/>
        </authorList>
    </citation>
    <scope>FUNCTION AS POLR2A CTD KINASE</scope>
</reference>
<reference key="28">
    <citation type="journal article" date="2009" name="Mol. Cell. Proteomics">
        <title>Large-scale proteomics analysis of the human kinome.</title>
        <authorList>
            <person name="Oppermann F.S."/>
            <person name="Gnad F."/>
            <person name="Olsen J.V."/>
            <person name="Hornberger R."/>
            <person name="Greff Z."/>
            <person name="Keri G."/>
            <person name="Mann M."/>
            <person name="Daub H."/>
        </authorList>
    </citation>
    <scope>IDENTIFICATION BY MASS SPECTROMETRY [LARGE SCALE ANALYSIS]</scope>
</reference>
<reference key="29">
    <citation type="journal article" date="2009" name="Nucleic Acids Res.">
        <title>Binding to DNA of the RNA-polymerase II C-terminal domain allows discrimination between Cdk7 and Cdk9 phosphorylation.</title>
        <authorList>
            <person name="Lolli G."/>
        </authorList>
    </citation>
    <scope>FUNCTION AS POLR2A CTD KINASE</scope>
</reference>
<reference key="30">
    <citation type="journal article" date="2009" name="Peptides">
        <title>DNA-Bound peptides control the mRNA transcription through CDK7.</title>
        <authorList>
            <person name="Lv X."/>
            <person name="Wang J."/>
            <person name="Dong Z."/>
            <person name="Lv F."/>
            <person name="Qin Y."/>
        </authorList>
    </citation>
    <scope>FUNCTION IN DNA-BOUND PEPTIDES TRANSCRIPTION INHIBITION</scope>
    <scope>SUBCELLULAR LOCATION</scope>
    <scope>INDUCTION</scope>
</reference>
<reference key="31">
    <citation type="journal article" date="2009" name="Sci. Signal.">
        <title>Quantitative phosphoproteomic analysis of T cell receptor signaling reveals system-wide modulation of protein-protein interactions.</title>
        <authorList>
            <person name="Mayya V."/>
            <person name="Lundgren D.H."/>
            <person name="Hwang S.-I."/>
            <person name="Rezaul K."/>
            <person name="Wu L."/>
            <person name="Eng J.K."/>
            <person name="Rodionov V."/>
            <person name="Han D.K."/>
        </authorList>
    </citation>
    <scope>PHOSPHORYLATION [LARGE SCALE ANALYSIS] AT THR-170</scope>
    <scope>IDENTIFICATION BY MASS SPECTROMETRY [LARGE SCALE ANALYSIS]</scope>
    <source>
        <tissue>Leukemic T-cell</tissue>
    </source>
</reference>
<reference key="32">
    <citation type="journal article" date="2010" name="J. Biol. Chem.">
        <title>Cdc25 phosphatases are required for timely assembly of CDK1-cyclin B at the G2/M transition.</title>
        <authorList>
            <person name="Timofeev O."/>
            <person name="Cizmecioglu O."/>
            <person name="Settele F."/>
            <person name="Kempf T."/>
            <person name="Hoffmann I."/>
        </authorList>
    </citation>
    <scope>FUNCTION AS CDK1 AND CDK2 KINASE</scope>
</reference>
<reference key="33">
    <citation type="journal article" date="2010" name="J. Cell. Biochem.">
        <title>R-roscovitine (Seliciclib) affects CLL cells more strongly than combinations of fludarabine or cladribine with cyclophosphamide: Inhibition of CDK7 sensitizes leukemic cells to caspase-dependent apoptosis.</title>
        <authorList>
            <person name="Rogalinska M."/>
            <person name="Blonski J.Z."/>
            <person name="Komina O."/>
            <person name="Goralski P."/>
            <person name="Zolnierczyk J.D."/>
            <person name="Piekarski H."/>
            <person name="Robak T."/>
            <person name="Kilianska Z.M."/>
            <person name="Wesierska-Gadek J."/>
        </authorList>
    </citation>
    <scope>ACTIVITY REGULATION</scope>
</reference>
<reference key="34">
    <citation type="journal article" date="2005" name="Cell Cycle">
        <title>CAK-Cyclin-dependent Activating Kinase: a key kinase in cell cycle control and a target for drugs?</title>
        <authorList>
            <person name="Lolli G."/>
            <person name="Johnson L.N."/>
        </authorList>
    </citation>
    <scope>REVIEW ON CELL CYCLE REGULATION</scope>
</reference>
<reference key="35">
    <citation type="journal article" date="2009" name="Nat. Rev. Cancer">
        <title>Cell cycle, CDKs and cancer: a changing paradigm.</title>
        <authorList>
            <person name="Malumbres M."/>
            <person name="Barbacid M."/>
        </authorList>
    </citation>
    <scope>REVIEW ON INHIBITORS</scope>
    <scope>GENE FAMILY</scope>
</reference>
<reference key="36">
    <citation type="journal article" date="2010" name="Sci. Signal.">
        <title>Quantitative phosphoproteomics reveals widespread full phosphorylation site occupancy during mitosis.</title>
        <authorList>
            <person name="Olsen J.V."/>
            <person name="Vermeulen M."/>
            <person name="Santamaria A."/>
            <person name="Kumar C."/>
            <person name="Miller M.L."/>
            <person name="Jensen L.J."/>
            <person name="Gnad F."/>
            <person name="Cox J."/>
            <person name="Jensen T.S."/>
            <person name="Nigg E.A."/>
            <person name="Brunak S."/>
            <person name="Mann M."/>
        </authorList>
    </citation>
    <scope>PHOSPHORYLATION [LARGE SCALE ANALYSIS] AT THR-170 AND SER-321</scope>
    <scope>IDENTIFICATION BY MASS SPECTROMETRY [LARGE SCALE ANALYSIS]</scope>
    <source>
        <tissue>Cervix carcinoma</tissue>
    </source>
</reference>
<reference key="37">
    <citation type="journal article" date="2011" name="BMC Syst. Biol.">
        <title>Initial characterization of the human central proteome.</title>
        <authorList>
            <person name="Burkard T.R."/>
            <person name="Planyavsky M."/>
            <person name="Kaupe I."/>
            <person name="Breitwieser F.P."/>
            <person name="Buerckstuemmer T."/>
            <person name="Bennett K.L."/>
            <person name="Superti-Furga G."/>
            <person name="Colinge J."/>
        </authorList>
    </citation>
    <scope>IDENTIFICATION BY MASS SPECTROMETRY [LARGE SCALE ANALYSIS]</scope>
</reference>
<reference key="38">
    <citation type="journal article" date="2011" name="DNA Repair">
        <title>A history of TFIIH: Two decades of molecular biology on a pivotal transcription/repair factor.</title>
        <authorList>
            <person name="Egly J.M."/>
            <person name="Coin F."/>
        </authorList>
    </citation>
    <scope>REVIEW ON TRANSCRIPTION REGULATION</scope>
</reference>
<reference key="39">
    <citation type="journal article" date="2011" name="Sci. Signal.">
        <title>System-wide temporal characterization of the proteome and phosphoproteome of human embryonic stem cell differentiation.</title>
        <authorList>
            <person name="Rigbolt K.T."/>
            <person name="Prokhorova T.A."/>
            <person name="Akimov V."/>
            <person name="Henningsen J."/>
            <person name="Johansen P.T."/>
            <person name="Kratchmarova I."/>
            <person name="Kassem M."/>
            <person name="Mann M."/>
            <person name="Olsen J.V."/>
            <person name="Blagoev B."/>
        </authorList>
    </citation>
    <scope>PHOSPHORYLATION [LARGE SCALE ANALYSIS] AT THR-170</scope>
    <scope>IDENTIFICATION BY MASS SPECTROMETRY [LARGE SCALE ANALYSIS]</scope>
</reference>
<reference key="40">
    <citation type="journal article" date="2012" name="Proc. Natl. Acad. Sci. U.S.A.">
        <title>N-terminal acetylome analyses and functional insights of the N-terminal acetyltransferase NatB.</title>
        <authorList>
            <person name="Van Damme P."/>
            <person name="Lasa M."/>
            <person name="Polevoda B."/>
            <person name="Gazquez C."/>
            <person name="Elosegui-Artola A."/>
            <person name="Kim D.S."/>
            <person name="De Juan-Pardo E."/>
            <person name="Demeyer K."/>
            <person name="Hole K."/>
            <person name="Larrea E."/>
            <person name="Timmerman E."/>
            <person name="Prieto J."/>
            <person name="Arnesen T."/>
            <person name="Sherman F."/>
            <person name="Gevaert K."/>
            <person name="Aldabe R."/>
        </authorList>
    </citation>
    <scope>ACETYLATION [LARGE SCALE ANALYSIS] AT ALA-2</scope>
    <scope>CLEAVAGE OF INITIATOR METHIONINE [LARGE SCALE ANALYSIS]</scope>
    <scope>IDENTIFICATION BY MASS SPECTROMETRY [LARGE SCALE ANALYSIS]</scope>
</reference>
<reference key="41">
    <citation type="journal article" date="2013" name="J. Proteome Res.">
        <title>Toward a comprehensive characterization of a human cancer cell phosphoproteome.</title>
        <authorList>
            <person name="Zhou H."/>
            <person name="Di Palma S."/>
            <person name="Preisinger C."/>
            <person name="Peng M."/>
            <person name="Polat A.N."/>
            <person name="Heck A.J."/>
            <person name="Mohammed S."/>
        </authorList>
    </citation>
    <scope>PHOSPHORYLATION [LARGE SCALE ANALYSIS] AT SER-164 AND THR-170</scope>
    <scope>IDENTIFICATION BY MASS SPECTROMETRY [LARGE SCALE ANALYSIS]</scope>
    <source>
        <tissue>Cervix carcinoma</tissue>
        <tissue>Erythroleukemia</tissue>
    </source>
</reference>
<reference key="42">
    <citation type="journal article" date="2014" name="J. Proteomics">
        <title>An enzyme assisted RP-RPLC approach for in-depth analysis of human liver phosphoproteome.</title>
        <authorList>
            <person name="Bian Y."/>
            <person name="Song C."/>
            <person name="Cheng K."/>
            <person name="Dong M."/>
            <person name="Wang F."/>
            <person name="Huang J."/>
            <person name="Sun D."/>
            <person name="Wang L."/>
            <person name="Ye M."/>
            <person name="Zou H."/>
        </authorList>
    </citation>
    <scope>IDENTIFICATION BY MASS SPECTROMETRY [LARGE SCALE ANALYSIS]</scope>
    <source>
        <tissue>Liver</tissue>
    </source>
</reference>
<reference key="43">
    <citation type="journal article" date="2015" name="Mol. Cell">
        <title>THZ1 Reveals Roles for Cdk7 in Co-transcriptional Capping and Pausing.</title>
        <authorList>
            <person name="Nilson K.A."/>
            <person name="Guo J."/>
            <person name="Turek M.E."/>
            <person name="Brogie J.E."/>
            <person name="Delaney E."/>
            <person name="Luse D.S."/>
            <person name="Price D.H."/>
        </authorList>
    </citation>
    <scope>FUNCTION</scope>
    <scope>CATALYTIC ACTIVITY</scope>
    <scope>ACTIVITY REGULATION</scope>
</reference>
<reference key="44">
    <citation type="journal article" date="2017" name="Cell Rep.">
        <title>Human TFIIH Kinase CDK7 Regulates Transcription-Associated Chromatin Modifications.</title>
        <authorList>
            <person name="Ebmeier C.C."/>
            <person name="Erickson B."/>
            <person name="Allen B.L."/>
            <person name="Allen M.A."/>
            <person name="Kim H."/>
            <person name="Fong N."/>
            <person name="Jacobsen J.R."/>
            <person name="Liang K."/>
            <person name="Shilatifard A."/>
            <person name="Dowell R.D."/>
            <person name="Old W.M."/>
            <person name="Bentley D.L."/>
            <person name="Taatjes D.J."/>
        </authorList>
    </citation>
    <scope>FUNCTION</scope>
    <scope>CATALYTIC ACTIVITY</scope>
</reference>
<reference key="45">
    <citation type="journal article" date="2004" name="Structure">
        <title>The crystal structure of human CDK7 and its protein recognition properties.</title>
        <authorList>
            <person name="Lolli G."/>
            <person name="Lowe E.D."/>
            <person name="Brown N.R."/>
            <person name="Johnson L.N."/>
        </authorList>
    </citation>
    <scope>X-RAY CRYSTALLOGRAPHY (3.02 ANGSTROMS) IN COMPLEX WITH ATP</scope>
    <scope>ACTIVE SITE</scope>
    <scope>PHOSPHORYLATION AT THR-170</scope>
</reference>
<reference key="46">
    <citation type="journal article" date="2007" name="Nature">
        <title>Patterns of somatic mutation in human cancer genomes.</title>
        <authorList>
            <person name="Greenman C."/>
            <person name="Stephens P."/>
            <person name="Smith R."/>
            <person name="Dalgliesh G.L."/>
            <person name="Hunter C."/>
            <person name="Bignell G."/>
            <person name="Davies H."/>
            <person name="Teague J."/>
            <person name="Butler A."/>
            <person name="Stevens C."/>
            <person name="Edkins S."/>
            <person name="O'Meara S."/>
            <person name="Vastrik I."/>
            <person name="Schmidt E.E."/>
            <person name="Avis T."/>
            <person name="Barthorpe S."/>
            <person name="Bhamra G."/>
            <person name="Buck G."/>
            <person name="Choudhury B."/>
            <person name="Clements J."/>
            <person name="Cole J."/>
            <person name="Dicks E."/>
            <person name="Forbes S."/>
            <person name="Gray K."/>
            <person name="Halliday K."/>
            <person name="Harrison R."/>
            <person name="Hills K."/>
            <person name="Hinton J."/>
            <person name="Jenkinson A."/>
            <person name="Jones D."/>
            <person name="Menzies A."/>
            <person name="Mironenko T."/>
            <person name="Perry J."/>
            <person name="Raine K."/>
            <person name="Richardson D."/>
            <person name="Shepherd R."/>
            <person name="Small A."/>
            <person name="Tofts C."/>
            <person name="Varian J."/>
            <person name="Webb T."/>
            <person name="West S."/>
            <person name="Widaa S."/>
            <person name="Yates A."/>
            <person name="Cahill D.P."/>
            <person name="Louis D.N."/>
            <person name="Goldstraw P."/>
            <person name="Nicholson A.G."/>
            <person name="Brasseur F."/>
            <person name="Looijenga L."/>
            <person name="Weber B.L."/>
            <person name="Chiew Y.-E."/>
            <person name="DeFazio A."/>
            <person name="Greaves M.F."/>
            <person name="Green A.R."/>
            <person name="Campbell P."/>
            <person name="Birney E."/>
            <person name="Easton D.F."/>
            <person name="Chenevix-Trench G."/>
            <person name="Tan M.-H."/>
            <person name="Khoo S.K."/>
            <person name="Teh B.T."/>
            <person name="Yuen S.T."/>
            <person name="Leung S.Y."/>
            <person name="Wooster R."/>
            <person name="Futreal P.A."/>
            <person name="Stratton M.R."/>
        </authorList>
    </citation>
    <scope>VARIANT [LARGE SCALE ANALYSIS] MET-285</scope>
</reference>
<keyword id="KW-0002">3D-structure</keyword>
<keyword id="KW-0007">Acetylation</keyword>
<keyword id="KW-0067">ATP-binding</keyword>
<keyword id="KW-0131">Cell cycle</keyword>
<keyword id="KW-0132">Cell division</keyword>
<keyword id="KW-0963">Cytoplasm</keyword>
<keyword id="KW-0227">DNA damage</keyword>
<keyword id="KW-0234">DNA repair</keyword>
<keyword id="KW-0418">Kinase</keyword>
<keyword id="KW-0547">Nucleotide-binding</keyword>
<keyword id="KW-0539">Nucleus</keyword>
<keyword id="KW-0597">Phosphoprotein</keyword>
<keyword id="KW-1267">Proteomics identification</keyword>
<keyword id="KW-1185">Reference proteome</keyword>
<keyword id="KW-0723">Serine/threonine-protein kinase</keyword>
<keyword id="KW-0804">Transcription</keyword>
<keyword id="KW-0805">Transcription regulation</keyword>
<keyword id="KW-0808">Transferase</keyword>
<comment type="function">
    <text evidence="3 6 9 11 12 13 14 15 16 17 18 20 21 22 24 26 27">Serine/threonine kinase involved in cell cycle control and in RNA polymerase II-mediated RNA transcription (PubMed:9852112, PubMed:19136461, PubMed:26257281, PubMed:28768201). Cyclin-dependent kinases (CDKs) are activated by the binding to a cyclin and mediate the progression through the cell cycle. Each different complex controls a specific transition between 2 subsequent phases in the cell cycle. Required for both activation and complex formation of CDK1/cyclin-B during G2-M transition, and for activation of CDK2/cyclins during G1-S transition (but not complex formation). CDK7 is the catalytic subunit of the CDK-activating kinase (CAK) complex. Phosphorylates SPT5/SUPT5H, SF1/NR5A1, POLR2A, p53/TP53, CDK1, CDK2, CDK4, CDK6 and CDK11B/CDK11 (PubMed:9372954, PubMed:9840937, PubMed:19136461, PubMed:26257281, PubMed:28768201). Initiates transcription by RNA polymerase II by mediating phosphorylation of POLR2A at 'Ser-5' of the repetitive C-terminal domain (CTD) when POLR2A is in complex with DNA, promoting dissociation from DNA and initiation (PubMed:19136461, PubMed:26257281, PubMed:28768201). CAK activates the cyclin-associated kinases CDK1, CDK2, CDK4 and CDK6 by threonine phosphorylation, thus regulating cell cycle progression. CAK complexed to the core-TFIIH basal transcription factor activates RNA polymerase II by serine phosphorylation of the CTD of POLR2A, allowing its escape from the promoter and elongation of the transcripts (PubMed:9852112). Its expression and activity are constant throughout the cell cycle. Upon DNA damage, triggers p53/TP53 activation by phosphorylation, but is inactivated in turn by p53/TP53; this feedback loop may lead to an arrest of the cell cycle and of the transcription, helping in cell recovery, or to apoptosis. Required for DNA-bound peptides-mediated transcription and cellular growth inhibition.</text>
</comment>
<comment type="catalytic activity">
    <reaction evidence="20 24 26">
        <text>L-seryl-[protein] + ATP = O-phospho-L-seryl-[protein] + ADP + H(+)</text>
        <dbReference type="Rhea" id="RHEA:17989"/>
        <dbReference type="Rhea" id="RHEA-COMP:9863"/>
        <dbReference type="Rhea" id="RHEA-COMP:11604"/>
        <dbReference type="ChEBI" id="CHEBI:15378"/>
        <dbReference type="ChEBI" id="CHEBI:29999"/>
        <dbReference type="ChEBI" id="CHEBI:30616"/>
        <dbReference type="ChEBI" id="CHEBI:83421"/>
        <dbReference type="ChEBI" id="CHEBI:456216"/>
        <dbReference type="EC" id="2.7.11.22"/>
    </reaction>
</comment>
<comment type="catalytic activity">
    <reaction evidence="20 24 26">
        <text>L-threonyl-[protein] + ATP = O-phospho-L-threonyl-[protein] + ADP + H(+)</text>
        <dbReference type="Rhea" id="RHEA:46608"/>
        <dbReference type="Rhea" id="RHEA-COMP:11060"/>
        <dbReference type="Rhea" id="RHEA-COMP:11605"/>
        <dbReference type="ChEBI" id="CHEBI:15378"/>
        <dbReference type="ChEBI" id="CHEBI:30013"/>
        <dbReference type="ChEBI" id="CHEBI:30616"/>
        <dbReference type="ChEBI" id="CHEBI:61977"/>
        <dbReference type="ChEBI" id="CHEBI:456216"/>
        <dbReference type="EC" id="2.7.11.22"/>
    </reaction>
</comment>
<comment type="catalytic activity">
    <reaction evidence="21 22 27">
        <text>[DNA-directed RNA polymerase] + ATP = phospho-[DNA-directed RNA polymerase] + ADP + H(+)</text>
        <dbReference type="Rhea" id="RHEA:10216"/>
        <dbReference type="Rhea" id="RHEA-COMP:11321"/>
        <dbReference type="Rhea" id="RHEA-COMP:11322"/>
        <dbReference type="ChEBI" id="CHEBI:15378"/>
        <dbReference type="ChEBI" id="CHEBI:30616"/>
        <dbReference type="ChEBI" id="CHEBI:43176"/>
        <dbReference type="ChEBI" id="CHEBI:68546"/>
        <dbReference type="ChEBI" id="CHEBI:456216"/>
        <dbReference type="EC" id="2.7.11.23"/>
    </reaction>
</comment>
<comment type="activity regulation">
    <text evidence="19 26">Inactivated by phosphorylation. Repressed by roscovitine (seliciclib, CYC202), R547 (Ro-4584820) and SNS-032 (BMS-387032). The association of p53/TP53 to the CAK complex in response to DNA damage reduces kinase activity toward CDK2 and RNA polymerase II repetitive C-terminal domain (CTD), thus stopping cell cycle progression. The inactivation by roscovitine promotes caspase-mediated apoptosis in leukemic cells. Specifically inactivated by THZ1 (PubMed:26257281).</text>
</comment>
<comment type="subunit">
    <text evidence="4 5 7 8 9 11 13 26 27">Associates primarily with cyclin-H (CCNH) and MAT1 to form the CAK complex. CAK can further associate with the core-TFIIH to form the TFIIH basal transcription factor; this complex is sensitive to UV light. The CAK complex binds to p53/TP53 in response to DNA damage. Interacts with CDK2, SF1/NR5A1, PUF60 and PRKCI. Interacts with HINT1 (PubMed:10958787).</text>
</comment>
<comment type="interaction">
    <interactant intactId="EBI-1245958">
        <id>P50613</id>
    </interactant>
    <interactant intactId="EBI-375096">
        <id>P24941</id>
        <label>CDK2</label>
    </interactant>
    <organismsDiffer>false</organismsDiffer>
    <experiments>3</experiments>
</comment>
<comment type="interaction">
    <interactant intactId="EBI-1245958">
        <id>P50613</id>
    </interactant>
    <interactant intactId="EBI-295644">
        <id>P11802</id>
        <label>CDK4</label>
    </interactant>
    <organismsDiffer>false</organismsDiffer>
    <experiments>2</experiments>
</comment>
<comment type="interaction">
    <interactant intactId="EBI-1245958">
        <id>P50613</id>
    </interactant>
    <interactant intactId="EBI-352572">
        <id>P08238</id>
        <label>HSP90AB1</label>
    </interactant>
    <organismsDiffer>false</organismsDiffer>
    <experiments>4</experiments>
</comment>
<comment type="interaction">
    <interactant intactId="EBI-1245958">
        <id>P50613</id>
    </interactant>
    <interactant intactId="EBI-539478">
        <id>Q96SB4</id>
        <label>SRPK1</label>
    </interactant>
    <organismsDiffer>false</organismsDiffer>
    <experiments>2</experiments>
</comment>
<comment type="interaction">
    <interactant intactId="EBI-1245958">
        <id>P50613</id>
    </interactant>
    <interactant intactId="EBI-593303">
        <id>P78362</id>
        <label>SRPK2</label>
    </interactant>
    <organismsDiffer>false</organismsDiffer>
    <experiments>2</experiments>
</comment>
<comment type="interaction">
    <interactant intactId="EBI-1245958">
        <id>P50613</id>
    </interactant>
    <interactant intactId="EBI-710464">
        <id>O00267</id>
        <label>SUPT5H</label>
    </interactant>
    <organismsDiffer>false</organismsDiffer>
    <experiments>3</experiments>
</comment>
<comment type="subcellular location">
    <subcellularLocation>
        <location evidence="5 8 15">Nucleus</location>
    </subcellularLocation>
    <subcellularLocation>
        <location evidence="8">Cytoplasm</location>
    </subcellularLocation>
    <subcellularLocation>
        <location evidence="15">Cytoplasm</location>
        <location evidence="15">Perinuclear region</location>
    </subcellularLocation>
    <text evidence="8 15">Colocalizes with PRKCI in the cytoplasm and nucleus (PubMed:15695176). Translocates from the nucleus to cytoplasm and perinuclear region in response to DNA-bound peptides (PubMed:19071173).</text>
</comment>
<comment type="tissue specificity">
    <text>Ubiquitous.</text>
</comment>
<comment type="induction">
    <text evidence="15">Repressed by DNA-bound peptides.</text>
</comment>
<comment type="PTM">
    <text evidence="6 7 25">Phosphorylation of Ser-164 during mitosis inactivates the enzyme. Phosphorylation of Thr-170 is required for activity. Phosphorylated at Ser-164 and Thr-170 by CDK2.</text>
</comment>
<comment type="similarity">
    <text evidence="29">Belongs to the protein kinase superfamily. CMGC Ser/Thr protein kinase family. CDC2/CDKX subfamily.</text>
</comment>
<accession>P50613</accession>
<accession>Q9BS60</accession>
<accession>Q9UE19</accession>
<feature type="initiator methionine" description="Removed" evidence="35">
    <location>
        <position position="1"/>
    </location>
</feature>
<feature type="chain" id="PRO_0000085791" description="Cyclin-dependent kinase 7">
    <location>
        <begin position="2"/>
        <end position="346"/>
    </location>
</feature>
<feature type="domain" description="Protein kinase" evidence="1">
    <location>
        <begin position="12"/>
        <end position="295"/>
    </location>
</feature>
<feature type="active site" description="Proton acceptor" evidence="1 2 7">
    <location>
        <position position="137"/>
    </location>
</feature>
<feature type="binding site" evidence="1 7">
    <location>
        <begin position="18"/>
        <end position="26"/>
    </location>
    <ligand>
        <name>ATP</name>
        <dbReference type="ChEBI" id="CHEBI:30616"/>
    </ligand>
</feature>
<feature type="binding site" evidence="1 7">
    <location>
        <position position="41"/>
    </location>
    <ligand>
        <name>ATP</name>
        <dbReference type="ChEBI" id="CHEBI:30616"/>
    </ligand>
</feature>
<feature type="modified residue" description="N-acetylalanine" evidence="35">
    <location>
        <position position="2"/>
    </location>
</feature>
<feature type="modified residue" description="Phosphoserine" evidence="31">
    <location>
        <position position="7"/>
    </location>
</feature>
<feature type="modified residue" description="Phosphoserine; by CDK1 and CDK2" evidence="6 25 30 31 36">
    <location>
        <position position="164"/>
    </location>
</feature>
<feature type="modified residue" description="Phosphothreonine; by CDK2" evidence="6 7 25 30 32 33 34 36">
    <location>
        <position position="170"/>
    </location>
</feature>
<feature type="modified residue" description="Phosphoserine" evidence="31 33">
    <location>
        <position position="321"/>
    </location>
</feature>
<feature type="sequence variant" id="VAR_023118" evidence="28">
    <original>G</original>
    <variation>A</variation>
    <location>
        <position position="163"/>
    </location>
</feature>
<feature type="sequence variant" id="VAR_023119" description="In dbSNP:rs34584424." evidence="10 28">
    <original>T</original>
    <variation>M</variation>
    <location>
        <position position="285"/>
    </location>
</feature>
<feature type="mutagenesis site" description="Total loss of activity.">
    <original>K</original>
    <variation>A</variation>
    <location>
        <position position="41"/>
    </location>
</feature>
<feature type="mutagenesis site" description="No effect on interaction with HINT1." evidence="5">
    <original>K</original>
    <variation>M</variation>
    <location>
        <position position="41"/>
    </location>
</feature>
<feature type="mutagenesis site" description="Enhanced capacity to bind ATP analogs." evidence="9">
    <original>F</original>
    <variation>G</variation>
    <location>
        <position position="91"/>
    </location>
</feature>
<feature type="mutagenesis site" description="No mitotic repression of transcriptional activity of the reconstituted TFIIH complex." evidence="25">
    <original>S</original>
    <variation>A</variation>
    <location>
        <position position="164"/>
    </location>
</feature>
<feature type="mutagenesis site" description="Total loss of activity. Total loss of transcriptional activity of the reconstituted TFIIH complex." evidence="23 25">
    <original>T</original>
    <variation>A</variation>
    <location>
        <position position="170"/>
    </location>
</feature>
<feature type="mutagenesis site" description="No effect on interaction with HINT1." evidence="5">
    <original>T</original>
    <variation>E</variation>
    <location>
        <position position="170"/>
    </location>
</feature>
<feature type="sequence conflict" description="In Ref. 7; AAH05298." evidence="29" ref="7">
    <original>Q</original>
    <variation>R</variation>
    <location>
        <position position="130"/>
    </location>
</feature>
<feature type="sequence conflict" description="In Ref. 5; CAA73587." evidence="29" ref="5">
    <original>F</original>
    <variation>C</variation>
    <location>
        <position position="249"/>
    </location>
</feature>
<feature type="sequence conflict" description="In Ref. 5; CAA73587." evidence="29" ref="5">
    <original>S</original>
    <variation>A</variation>
    <location>
        <position position="321"/>
    </location>
</feature>
<feature type="turn" evidence="44">
    <location>
        <begin position="2"/>
        <end position="4"/>
    </location>
</feature>
<feature type="strand" evidence="44">
    <location>
        <begin position="5"/>
        <end position="7"/>
    </location>
</feature>
<feature type="strand" evidence="41">
    <location>
        <begin position="16"/>
        <end position="20"/>
    </location>
</feature>
<feature type="strand" evidence="41">
    <location>
        <begin position="25"/>
        <end position="29"/>
    </location>
</feature>
<feature type="turn" evidence="43">
    <location>
        <begin position="32"/>
        <end position="34"/>
    </location>
</feature>
<feature type="strand" evidence="41">
    <location>
        <begin position="38"/>
        <end position="42"/>
    </location>
</feature>
<feature type="strand" evidence="42">
    <location>
        <begin position="50"/>
        <end position="53"/>
    </location>
</feature>
<feature type="helix" evidence="41">
    <location>
        <begin position="57"/>
        <end position="67"/>
    </location>
</feature>
<feature type="strand" evidence="41">
    <location>
        <begin position="77"/>
        <end position="83"/>
    </location>
</feature>
<feature type="strand" evidence="41">
    <location>
        <begin position="86"/>
        <end position="92"/>
    </location>
</feature>
<feature type="strand" evidence="40">
    <location>
        <begin position="95"/>
        <end position="97"/>
    </location>
</feature>
<feature type="helix" evidence="41">
    <location>
        <begin position="98"/>
        <end position="103"/>
    </location>
</feature>
<feature type="strand" evidence="41">
    <location>
        <begin position="105"/>
        <end position="107"/>
    </location>
</feature>
<feature type="helix" evidence="41">
    <location>
        <begin position="111"/>
        <end position="130"/>
    </location>
</feature>
<feature type="strand" evidence="38">
    <location>
        <begin position="133"/>
        <end position="135"/>
    </location>
</feature>
<feature type="helix" evidence="41">
    <location>
        <begin position="140"/>
        <end position="142"/>
    </location>
</feature>
<feature type="strand" evidence="41">
    <location>
        <begin position="143"/>
        <end position="145"/>
    </location>
</feature>
<feature type="strand" evidence="41">
    <location>
        <begin position="151"/>
        <end position="153"/>
    </location>
</feature>
<feature type="helix" evidence="40">
    <location>
        <begin position="156"/>
        <end position="158"/>
    </location>
</feature>
<feature type="strand" evidence="45">
    <location>
        <begin position="160"/>
        <end position="164"/>
    </location>
</feature>
<feature type="strand" evidence="43">
    <location>
        <begin position="168"/>
        <end position="170"/>
    </location>
</feature>
<feature type="helix" evidence="41">
    <location>
        <begin position="176"/>
        <end position="178"/>
    </location>
</feature>
<feature type="helix" evidence="41">
    <location>
        <begin position="181"/>
        <end position="184"/>
    </location>
</feature>
<feature type="strand" evidence="42">
    <location>
        <begin position="188"/>
        <end position="190"/>
    </location>
</feature>
<feature type="helix" evidence="41">
    <location>
        <begin position="193"/>
        <end position="208"/>
    </location>
</feature>
<feature type="helix" evidence="41">
    <location>
        <begin position="218"/>
        <end position="229"/>
    </location>
</feature>
<feature type="turn" evidence="41">
    <location>
        <begin position="234"/>
        <end position="236"/>
    </location>
</feature>
<feature type="strand" evidence="37">
    <location>
        <begin position="237"/>
        <end position="239"/>
    </location>
</feature>
<feature type="helix" evidence="41">
    <location>
        <begin position="240"/>
        <end position="242"/>
    </location>
</feature>
<feature type="helix" evidence="41">
    <location>
        <begin position="257"/>
        <end position="260"/>
    </location>
</feature>
<feature type="strand" evidence="39">
    <location>
        <begin position="261"/>
        <end position="263"/>
    </location>
</feature>
<feature type="helix" evidence="41">
    <location>
        <begin position="266"/>
        <end position="275"/>
    </location>
</feature>
<feature type="turn" evidence="41">
    <location>
        <begin position="280"/>
        <end position="282"/>
    </location>
</feature>
<feature type="helix" evidence="41">
    <location>
        <begin position="286"/>
        <end position="291"/>
    </location>
</feature>
<feature type="helix" evidence="41">
    <location>
        <begin position="293"/>
        <end position="296"/>
    </location>
</feature>
<feature type="strand" evidence="41">
    <location>
        <begin position="297"/>
        <end position="299"/>
    </location>
</feature>
<feature type="helix" evidence="41">
    <location>
        <begin position="304"/>
        <end position="306"/>
    </location>
</feature>
<evidence type="ECO:0000255" key="1">
    <source>
        <dbReference type="PROSITE-ProRule" id="PRU00159"/>
    </source>
</evidence>
<evidence type="ECO:0000255" key="2">
    <source>
        <dbReference type="PROSITE-ProRule" id="PRU10027"/>
    </source>
</evidence>
<evidence type="ECO:0000269" key="3">
    <source>
    </source>
</evidence>
<evidence type="ECO:0000269" key="4">
    <source>
    </source>
</evidence>
<evidence type="ECO:0000269" key="5">
    <source>
    </source>
</evidence>
<evidence type="ECO:0000269" key="6">
    <source>
    </source>
</evidence>
<evidence type="ECO:0000269" key="7">
    <source>
    </source>
</evidence>
<evidence type="ECO:0000269" key="8">
    <source>
    </source>
</evidence>
<evidence type="ECO:0000269" key="9">
    <source>
    </source>
</evidence>
<evidence type="ECO:0000269" key="10">
    <source>
    </source>
</evidence>
<evidence type="ECO:0000269" key="11">
    <source>
    </source>
</evidence>
<evidence type="ECO:0000269" key="12">
    <source>
    </source>
</evidence>
<evidence type="ECO:0000269" key="13">
    <source>
    </source>
</evidence>
<evidence type="ECO:0000269" key="14">
    <source>
    </source>
</evidence>
<evidence type="ECO:0000269" key="15">
    <source>
    </source>
</evidence>
<evidence type="ECO:0000269" key="16">
    <source>
    </source>
</evidence>
<evidence type="ECO:0000269" key="17">
    <source>
    </source>
</evidence>
<evidence type="ECO:0000269" key="18">
    <source>
    </source>
</evidence>
<evidence type="ECO:0000269" key="19">
    <source>
    </source>
</evidence>
<evidence type="ECO:0000269" key="20">
    <source>
    </source>
</evidence>
<evidence type="ECO:0000269" key="21">
    <source>
    </source>
</evidence>
<evidence type="ECO:0000269" key="22">
    <source>
    </source>
</evidence>
<evidence type="ECO:0000269" key="23">
    <source>
    </source>
</evidence>
<evidence type="ECO:0000269" key="24">
    <source>
    </source>
</evidence>
<evidence type="ECO:0000269" key="25">
    <source>
    </source>
</evidence>
<evidence type="ECO:0000269" key="26">
    <source>
    </source>
</evidence>
<evidence type="ECO:0000269" key="27">
    <source>
    </source>
</evidence>
<evidence type="ECO:0000269" key="28">
    <source ref="6"/>
</evidence>
<evidence type="ECO:0000305" key="29"/>
<evidence type="ECO:0007744" key="30">
    <source>
    </source>
</evidence>
<evidence type="ECO:0007744" key="31">
    <source>
    </source>
</evidence>
<evidence type="ECO:0007744" key="32">
    <source>
    </source>
</evidence>
<evidence type="ECO:0007744" key="33">
    <source>
    </source>
</evidence>
<evidence type="ECO:0007744" key="34">
    <source>
    </source>
</evidence>
<evidence type="ECO:0007744" key="35">
    <source>
    </source>
</evidence>
<evidence type="ECO:0007744" key="36">
    <source>
    </source>
</evidence>
<evidence type="ECO:0007829" key="37">
    <source>
        <dbReference type="PDB" id="1UA2"/>
    </source>
</evidence>
<evidence type="ECO:0007829" key="38">
    <source>
        <dbReference type="PDB" id="6XBZ"/>
    </source>
</evidence>
<evidence type="ECO:0007829" key="39">
    <source>
        <dbReference type="PDB" id="8P75"/>
    </source>
</evidence>
<evidence type="ECO:0007829" key="40">
    <source>
        <dbReference type="PDB" id="8P77"/>
    </source>
</evidence>
<evidence type="ECO:0007829" key="41">
    <source>
        <dbReference type="PDB" id="8P79"/>
    </source>
</evidence>
<evidence type="ECO:0007829" key="42">
    <source>
        <dbReference type="PDB" id="8PYR"/>
    </source>
</evidence>
<evidence type="ECO:0007829" key="43">
    <source>
        <dbReference type="PDB" id="8R9A"/>
    </source>
</evidence>
<evidence type="ECO:0007829" key="44">
    <source>
        <dbReference type="PDB" id="8R9B"/>
    </source>
</evidence>
<evidence type="ECO:0007829" key="45">
    <source>
        <dbReference type="PDB" id="8R9U"/>
    </source>
</evidence>
<sequence length="346" mass="39038">MALDVKSRAKRYEKLDFLGEGQFATVYKARDKNTNQIVAIKKIKLGHRSEAKDGINRTALREIKLLQELSHPNIIGLLDAFGHKSNISLVFDFMETDLEVIIKDNSLVLTPSHIKAYMLMTLQGLEYLHQHWILHRDLKPNNLLLDENGVLKLADFGLAKSFGSPNRAYTHQVVTRWYRAPELLFGARMYGVGVDMWAVGCILAELLLRVPFLPGDSDLDQLTRIFETLGTPTEEQWPDMCSLPDYVTFKSFPGIPLHHIFSAAGDDLLDLIQGLFLFNPCARITATQALKMKYFSNRPGPTPGCQLPRPNCPVETLKEQSNPALAIKRKRTEALEQGGLPKKLIF</sequence>
<dbReference type="EC" id="2.7.11.22" evidence="20 24 26"/>
<dbReference type="EC" id="2.7.11.23" evidence="21 22 27"/>
<dbReference type="EMBL" id="X79193">
    <property type="protein sequence ID" value="CAA55785.1"/>
    <property type="molecule type" value="mRNA"/>
</dbReference>
<dbReference type="EMBL" id="L20320">
    <property type="protein sequence ID" value="AAA36657.1"/>
    <property type="molecule type" value="mRNA"/>
</dbReference>
<dbReference type="EMBL" id="X77743">
    <property type="protein sequence ID" value="CAA54793.1"/>
    <property type="molecule type" value="mRNA"/>
</dbReference>
<dbReference type="EMBL" id="X77303">
    <property type="protein sequence ID" value="CAA54508.1"/>
    <property type="molecule type" value="mRNA"/>
</dbReference>
<dbReference type="EMBL" id="Y13120">
    <property type="protein sequence ID" value="CAA73587.1"/>
    <property type="molecule type" value="mRNA"/>
</dbReference>
<dbReference type="EMBL" id="AY130859">
    <property type="protein sequence ID" value="AAM77799.1"/>
    <property type="molecule type" value="Genomic_DNA"/>
</dbReference>
<dbReference type="EMBL" id="BC000834">
    <property type="protein sequence ID" value="AAH00834.1"/>
    <property type="molecule type" value="mRNA"/>
</dbReference>
<dbReference type="EMBL" id="BC005298">
    <property type="protein sequence ID" value="AAH05298.1"/>
    <property type="molecule type" value="mRNA"/>
</dbReference>
<dbReference type="CCDS" id="CCDS3999.1"/>
<dbReference type="PIR" id="A54820">
    <property type="entry name" value="A54820"/>
</dbReference>
<dbReference type="PIR" id="I37215">
    <property type="entry name" value="I37215"/>
</dbReference>
<dbReference type="RefSeq" id="NP_001310998.1">
    <property type="nucleotide sequence ID" value="NM_001324069.1"/>
</dbReference>
<dbReference type="RefSeq" id="NP_001310999.1">
    <property type="nucleotide sequence ID" value="NM_001324070.1"/>
</dbReference>
<dbReference type="RefSeq" id="NP_001311000.1">
    <property type="nucleotide sequence ID" value="NM_001324071.1"/>
</dbReference>
<dbReference type="RefSeq" id="NP_001311006.1">
    <property type="nucleotide sequence ID" value="NM_001324077.1"/>
</dbReference>
<dbReference type="RefSeq" id="NP_001790.1">
    <property type="nucleotide sequence ID" value="NM_001799.4"/>
</dbReference>
<dbReference type="PDB" id="1UA2">
    <property type="method" value="X-ray"/>
    <property type="resolution" value="3.02 A"/>
    <property type="chains" value="A/B/C/D=1-346"/>
</dbReference>
<dbReference type="PDB" id="6O9L">
    <property type="method" value="EM"/>
    <property type="resolution" value="7.20 A"/>
    <property type="chains" value="8=1-346"/>
</dbReference>
<dbReference type="PDB" id="6XBZ">
    <property type="method" value="EM"/>
    <property type="resolution" value="2.80 A"/>
    <property type="chains" value="J=1-346"/>
</dbReference>
<dbReference type="PDB" id="6XD3">
    <property type="method" value="EM"/>
    <property type="resolution" value="3.30 A"/>
    <property type="chains" value="J=1-346"/>
</dbReference>
<dbReference type="PDB" id="7B5O">
    <property type="method" value="EM"/>
    <property type="resolution" value="2.50 A"/>
    <property type="chains" value="J=1-346"/>
</dbReference>
<dbReference type="PDB" id="7B5Q">
    <property type="method" value="EM"/>
    <property type="resolution" value="2.50 A"/>
    <property type="chains" value="J=1-346"/>
</dbReference>
<dbReference type="PDB" id="7EGB">
    <property type="method" value="EM"/>
    <property type="resolution" value="3.30 A"/>
    <property type="chains" value="8=1-346"/>
</dbReference>
<dbReference type="PDB" id="7EGC">
    <property type="method" value="EM"/>
    <property type="resolution" value="3.90 A"/>
    <property type="chains" value="8=1-346"/>
</dbReference>
<dbReference type="PDB" id="7ENA">
    <property type="method" value="EM"/>
    <property type="resolution" value="4.07 A"/>
    <property type="chains" value="8=1-346"/>
</dbReference>
<dbReference type="PDB" id="7ENC">
    <property type="method" value="EM"/>
    <property type="resolution" value="4.13 A"/>
    <property type="chains" value="8=1-346"/>
</dbReference>
<dbReference type="PDB" id="7LBM">
    <property type="method" value="EM"/>
    <property type="resolution" value="4.80 A"/>
    <property type="chains" value="e=1-346"/>
</dbReference>
<dbReference type="PDB" id="7NVR">
    <property type="method" value="EM"/>
    <property type="resolution" value="4.50 A"/>
    <property type="chains" value="8=1-346"/>
</dbReference>
<dbReference type="PDB" id="8BVW">
    <property type="method" value="EM"/>
    <property type="resolution" value="4.00 A"/>
    <property type="chains" value="8=1-346"/>
</dbReference>
<dbReference type="PDB" id="8BYQ">
    <property type="method" value="EM"/>
    <property type="resolution" value="4.10 A"/>
    <property type="chains" value="8=1-346"/>
</dbReference>
<dbReference type="PDB" id="8GXQ">
    <property type="method" value="EM"/>
    <property type="resolution" value="5.04 A"/>
    <property type="chains" value="HI=1-346"/>
</dbReference>
<dbReference type="PDB" id="8GXS">
    <property type="method" value="EM"/>
    <property type="resolution" value="4.16 A"/>
    <property type="chains" value="HI=1-346"/>
</dbReference>
<dbReference type="PDB" id="8ORM">
    <property type="method" value="EM"/>
    <property type="resolution" value="1.90 A"/>
    <property type="chains" value="J=1-346"/>
</dbReference>
<dbReference type="PDB" id="8P4Z">
    <property type="method" value="X-ray"/>
    <property type="resolution" value="2.75 A"/>
    <property type="chains" value="A/B=10-311"/>
</dbReference>
<dbReference type="PDB" id="8P6V">
    <property type="method" value="EM"/>
    <property type="resolution" value="1.90 A"/>
    <property type="chains" value="J=1-346"/>
</dbReference>
<dbReference type="PDB" id="8P6W">
    <property type="method" value="EM"/>
    <property type="resolution" value="1.90 A"/>
    <property type="chains" value="J=1-346"/>
</dbReference>
<dbReference type="PDB" id="8P6X">
    <property type="method" value="EM"/>
    <property type="resolution" value="1.90 A"/>
    <property type="chains" value="J=1-346"/>
</dbReference>
<dbReference type="PDB" id="8P6Y">
    <property type="method" value="EM"/>
    <property type="resolution" value="1.90 A"/>
    <property type="chains" value="J=1-346"/>
</dbReference>
<dbReference type="PDB" id="8P6Z">
    <property type="method" value="EM"/>
    <property type="resolution" value="2.10 A"/>
    <property type="chains" value="J=1-346"/>
</dbReference>
<dbReference type="PDB" id="8P70">
    <property type="method" value="EM"/>
    <property type="resolution" value="2.00 A"/>
    <property type="chains" value="J=1-346"/>
</dbReference>
<dbReference type="PDB" id="8P71">
    <property type="method" value="EM"/>
    <property type="resolution" value="2.00 A"/>
    <property type="chains" value="J=1-346"/>
</dbReference>
<dbReference type="PDB" id="8P72">
    <property type="method" value="EM"/>
    <property type="resolution" value="1.90 A"/>
    <property type="chains" value="J=1-346"/>
</dbReference>
<dbReference type="PDB" id="8P73">
    <property type="method" value="EM"/>
    <property type="resolution" value="2.00 A"/>
    <property type="chains" value="J=1-346"/>
</dbReference>
<dbReference type="PDB" id="8P74">
    <property type="method" value="EM"/>
    <property type="resolution" value="2.20 A"/>
    <property type="chains" value="J=1-346"/>
</dbReference>
<dbReference type="PDB" id="8P75">
    <property type="method" value="EM"/>
    <property type="resolution" value="2.00 A"/>
    <property type="chains" value="J=1-346"/>
</dbReference>
<dbReference type="PDB" id="8P76">
    <property type="method" value="EM"/>
    <property type="resolution" value="2.00 A"/>
    <property type="chains" value="J=1-346"/>
</dbReference>
<dbReference type="PDB" id="8P77">
    <property type="method" value="EM"/>
    <property type="resolution" value="1.80 A"/>
    <property type="chains" value="J=1-346"/>
</dbReference>
<dbReference type="PDB" id="8P78">
    <property type="method" value="EM"/>
    <property type="resolution" value="1.90 A"/>
    <property type="chains" value="J=1-346"/>
</dbReference>
<dbReference type="PDB" id="8P79">
    <property type="method" value="EM"/>
    <property type="resolution" value="1.70 A"/>
    <property type="chains" value="J=1-346"/>
</dbReference>
<dbReference type="PDB" id="8P7L">
    <property type="method" value="EM"/>
    <property type="resolution" value="2.10 A"/>
    <property type="chains" value="J=1-346"/>
</dbReference>
<dbReference type="PDB" id="8PLZ">
    <property type="method" value="EM"/>
    <property type="resolution" value="1.90 A"/>
    <property type="chains" value="J=1-346"/>
</dbReference>
<dbReference type="PDB" id="8PYR">
    <property type="method" value="X-ray"/>
    <property type="resolution" value="2.15 A"/>
    <property type="chains" value="A/E=1-346"/>
</dbReference>
<dbReference type="PDB" id="8R99">
    <property type="method" value="X-ray"/>
    <property type="resolution" value="1.81 A"/>
    <property type="chains" value="A=1-346"/>
</dbReference>
<dbReference type="PDB" id="8R9A">
    <property type="method" value="X-ray"/>
    <property type="resolution" value="1.71 A"/>
    <property type="chains" value="A=1-346"/>
</dbReference>
<dbReference type="PDB" id="8R9B">
    <property type="method" value="X-ray"/>
    <property type="resolution" value="2.21 A"/>
    <property type="chains" value="A/B/C/D=1-326"/>
</dbReference>
<dbReference type="PDB" id="8R9O">
    <property type="method" value="X-ray"/>
    <property type="resolution" value="2.22 A"/>
    <property type="chains" value="A/B=1-346"/>
</dbReference>
<dbReference type="PDB" id="8R9S">
    <property type="method" value="X-ray"/>
    <property type="resolution" value="2.78 A"/>
    <property type="chains" value="A/B=1-346"/>
</dbReference>
<dbReference type="PDB" id="8R9U">
    <property type="method" value="X-ray"/>
    <property type="resolution" value="1.94 A"/>
    <property type="chains" value="A/B=1-346"/>
</dbReference>
<dbReference type="PDB" id="8S0R">
    <property type="method" value="EM"/>
    <property type="resolution" value="2.40 A"/>
    <property type="chains" value="J=1-346"/>
</dbReference>
<dbReference type="PDB" id="8S0T">
    <property type="method" value="EM"/>
    <property type="resolution" value="2.30 A"/>
    <property type="chains" value="J=1-346"/>
</dbReference>
<dbReference type="PDBsum" id="1UA2"/>
<dbReference type="PDBsum" id="6O9L"/>
<dbReference type="PDBsum" id="6XBZ"/>
<dbReference type="PDBsum" id="6XD3"/>
<dbReference type="PDBsum" id="7B5O"/>
<dbReference type="PDBsum" id="7B5Q"/>
<dbReference type="PDBsum" id="7EGB"/>
<dbReference type="PDBsum" id="7EGC"/>
<dbReference type="PDBsum" id="7ENA"/>
<dbReference type="PDBsum" id="7ENC"/>
<dbReference type="PDBsum" id="7LBM"/>
<dbReference type="PDBsum" id="7NVR"/>
<dbReference type="PDBsum" id="8BVW"/>
<dbReference type="PDBsum" id="8BYQ"/>
<dbReference type="PDBsum" id="8GXQ"/>
<dbReference type="PDBsum" id="8GXS"/>
<dbReference type="PDBsum" id="8ORM"/>
<dbReference type="PDBsum" id="8P4Z"/>
<dbReference type="PDBsum" id="8P6V"/>
<dbReference type="PDBsum" id="8P6W"/>
<dbReference type="PDBsum" id="8P6X"/>
<dbReference type="PDBsum" id="8P6Y"/>
<dbReference type="PDBsum" id="8P6Z"/>
<dbReference type="PDBsum" id="8P70"/>
<dbReference type="PDBsum" id="8P71"/>
<dbReference type="PDBsum" id="8P72"/>
<dbReference type="PDBsum" id="8P73"/>
<dbReference type="PDBsum" id="8P74"/>
<dbReference type="PDBsum" id="8P75"/>
<dbReference type="PDBsum" id="8P76"/>
<dbReference type="PDBsum" id="8P77"/>
<dbReference type="PDBsum" id="8P78"/>
<dbReference type="PDBsum" id="8P79"/>
<dbReference type="PDBsum" id="8P7L"/>
<dbReference type="PDBsum" id="8PLZ"/>
<dbReference type="PDBsum" id="8PYR"/>
<dbReference type="PDBsum" id="8R99"/>
<dbReference type="PDBsum" id="8R9A"/>
<dbReference type="PDBsum" id="8R9B"/>
<dbReference type="PDBsum" id="8R9O"/>
<dbReference type="PDBsum" id="8R9S"/>
<dbReference type="PDBsum" id="8R9U"/>
<dbReference type="PDBsum" id="8S0R"/>
<dbReference type="PDBsum" id="8S0T"/>
<dbReference type="EMDB" id="EMD-12042"/>
<dbReference type="EMDB" id="EMD-12610"/>
<dbReference type="EMDB" id="EMD-16274"/>
<dbReference type="EMDB" id="EMD-16331"/>
<dbReference type="EMDB" id="EMD-17129"/>
<dbReference type="EMDB" id="EMD-17470"/>
<dbReference type="EMDB" id="EMD-17471"/>
<dbReference type="EMDB" id="EMD-17472"/>
<dbReference type="EMDB" id="EMD-17473"/>
<dbReference type="EMDB" id="EMD-17474"/>
<dbReference type="EMDB" id="EMD-17475"/>
<dbReference type="EMDB" id="EMD-17476"/>
<dbReference type="EMDB" id="EMD-17477"/>
<dbReference type="EMDB" id="EMD-17478"/>
<dbReference type="EMDB" id="EMD-17479"/>
<dbReference type="EMDB" id="EMD-17480"/>
<dbReference type="EMDB" id="EMD-17481"/>
<dbReference type="EMDB" id="EMD-17482"/>
<dbReference type="EMDB" id="EMD-17483"/>
<dbReference type="EMDB" id="EMD-17484"/>
<dbReference type="EMDB" id="EMD-17485"/>
<dbReference type="EMDB" id="EMD-17486"/>
<dbReference type="EMDB" id="EMD-17487"/>
<dbReference type="EMDB" id="EMD-17488"/>
<dbReference type="EMDB" id="EMD-17489"/>
<dbReference type="EMDB" id="EMD-17490"/>
<dbReference type="EMDB" id="EMD-17491"/>
<dbReference type="EMDB" id="EMD-17492"/>
<dbReference type="EMDB" id="EMD-17493"/>
<dbReference type="EMDB" id="EMD-17494"/>
<dbReference type="EMDB" id="EMD-17495"/>
<dbReference type="EMDB" id="EMD-17496"/>
<dbReference type="EMDB" id="EMD-17497"/>
<dbReference type="EMDB" id="EMD-17498"/>
<dbReference type="EMDB" id="EMD-17499"/>
<dbReference type="EMDB" id="EMD-17500"/>
<dbReference type="EMDB" id="EMD-17501"/>
<dbReference type="EMDB" id="EMD-17502"/>
<dbReference type="EMDB" id="EMD-17503"/>
<dbReference type="EMDB" id="EMD-17504"/>
<dbReference type="EMDB" id="EMD-17505"/>
<dbReference type="EMDB" id="EMD-17506"/>
<dbReference type="EMDB" id="EMD-17507"/>
<dbReference type="EMDB" id="EMD-17508"/>
<dbReference type="EMDB" id="EMD-17509"/>
<dbReference type="EMDB" id="EMD-17510"/>
<dbReference type="EMDB" id="EMD-17511"/>
<dbReference type="EMDB" id="EMD-17512"/>
<dbReference type="EMDB" id="EMD-17513"/>
<dbReference type="EMDB" id="EMD-17514"/>
<dbReference type="EMDB" id="EMD-17515"/>
<dbReference type="EMDB" id="EMD-17516"/>
<dbReference type="EMDB" id="EMD-17517"/>
<dbReference type="EMDB" id="EMD-17518"/>
<dbReference type="EMDB" id="EMD-17519"/>
<dbReference type="EMDB" id="EMD-17520"/>
<dbReference type="EMDB" id="EMD-17521"/>
<dbReference type="EMDB" id="EMD-17522"/>
<dbReference type="EMDB" id="EMD-17523"/>
<dbReference type="EMDB" id="EMD-17524"/>
<dbReference type="EMDB" id="EMD-17525"/>
<dbReference type="EMDB" id="EMD-17526"/>
<dbReference type="EMDB" id="EMD-17527"/>
<dbReference type="EMDB" id="EMD-17536"/>
<dbReference type="EMDB" id="EMD-17754"/>
<dbReference type="EMDB" id="EMD-19627"/>
<dbReference type="EMDB" id="EMD-19628"/>
<dbReference type="EMDB" id="EMD-22123"/>
<dbReference type="EMDB" id="EMD-22131"/>
<dbReference type="EMDB" id="EMD-23255"/>
<dbReference type="EMDB" id="EMD-31111"/>
<dbReference type="EMDB" id="EMD-31112"/>
<dbReference type="EMDB" id="EMD-31204"/>
<dbReference type="EMDB" id="EMD-31207"/>
<dbReference type="EMDB" id="EMD-34359"/>
<dbReference type="EMDB" id="EMD-34360"/>
<dbReference type="SMR" id="P50613"/>
<dbReference type="BioGRID" id="107457">
    <property type="interactions" value="517"/>
</dbReference>
<dbReference type="ComplexPortal" id="CPX-2395">
    <property type="entry name" value="General transcription factor TFIIH complex"/>
</dbReference>
<dbReference type="ComplexPortal" id="CPX-578">
    <property type="entry name" value="Cyclin-dependent protein kinase-activating kinase complex"/>
</dbReference>
<dbReference type="CORUM" id="P50613"/>
<dbReference type="DIP" id="DIP-5995N"/>
<dbReference type="FunCoup" id="P50613">
    <property type="interactions" value="3585"/>
</dbReference>
<dbReference type="IntAct" id="P50613">
    <property type="interactions" value="162"/>
</dbReference>
<dbReference type="MINT" id="P50613"/>
<dbReference type="STRING" id="9606.ENSP00000256443"/>
<dbReference type="BindingDB" id="P50613"/>
<dbReference type="ChEMBL" id="CHEMBL3055"/>
<dbReference type="DrugBank" id="DB03496">
    <property type="generic name" value="Alvocidib"/>
</dbReference>
<dbReference type="DrugBank" id="DB02482">
    <property type="generic name" value="Phosphonothreonine"/>
</dbReference>
<dbReference type="DrugBank" id="DB08094">
    <property type="generic name" value="RO-4584820"/>
</dbReference>
<dbReference type="DrugBank" id="DB16061">
    <property type="generic name" value="Samuraciclib"/>
</dbReference>
<dbReference type="DrugBank" id="DB06195">
    <property type="generic name" value="Seliciclib"/>
</dbReference>
<dbReference type="DrugBank" id="DB05969">
    <property type="generic name" value="SNS-032"/>
</dbReference>
<dbReference type="DrugBank" id="DB15442">
    <property type="generic name" value="Trilaciclib"/>
</dbReference>
<dbReference type="DrugCentral" id="P50613"/>
<dbReference type="GuidetoPHARMACOLOGY" id="1979"/>
<dbReference type="GlyGen" id="P50613">
    <property type="glycosylation" value="2 sites, 1 O-linked glycan (1 site)"/>
</dbReference>
<dbReference type="iPTMnet" id="P50613"/>
<dbReference type="PhosphoSitePlus" id="P50613"/>
<dbReference type="BioMuta" id="CDK7"/>
<dbReference type="DMDM" id="1705722"/>
<dbReference type="CPTAC" id="CPTAC-3036"/>
<dbReference type="CPTAC" id="CPTAC-3037"/>
<dbReference type="CPTAC" id="CPTAC-5912"/>
<dbReference type="jPOST" id="P50613"/>
<dbReference type="MassIVE" id="P50613"/>
<dbReference type="PaxDb" id="9606-ENSP00000256443"/>
<dbReference type="PeptideAtlas" id="P50613"/>
<dbReference type="ProteomicsDB" id="56258"/>
<dbReference type="Pumba" id="P50613"/>
<dbReference type="Antibodypedia" id="1446">
    <property type="antibodies" value="821 antibodies from 45 providers"/>
</dbReference>
<dbReference type="CPTC" id="P50613">
    <property type="antibodies" value="1 antibody"/>
</dbReference>
<dbReference type="DNASU" id="1022"/>
<dbReference type="Ensembl" id="ENST00000256443.8">
    <property type="protein sequence ID" value="ENSP00000256443.3"/>
    <property type="gene ID" value="ENSG00000134058.12"/>
</dbReference>
<dbReference type="Ensembl" id="ENST00000615305.4">
    <property type="protein sequence ID" value="ENSP00000479116.1"/>
    <property type="gene ID" value="ENSG00000277273.5"/>
</dbReference>
<dbReference type="GeneID" id="1022"/>
<dbReference type="KEGG" id="hsa:1022"/>
<dbReference type="MANE-Select" id="ENST00000256443.8">
    <property type="protein sequence ID" value="ENSP00000256443.3"/>
    <property type="RefSeq nucleotide sequence ID" value="NM_001799.4"/>
    <property type="RefSeq protein sequence ID" value="NP_001790.1"/>
</dbReference>
<dbReference type="UCSC" id="uc003jvs.5">
    <property type="organism name" value="human"/>
</dbReference>
<dbReference type="AGR" id="HGNC:1778"/>
<dbReference type="CTD" id="1022"/>
<dbReference type="DisGeNET" id="1022"/>
<dbReference type="GeneCards" id="CDK7"/>
<dbReference type="HGNC" id="HGNC:1778">
    <property type="gene designation" value="CDK7"/>
</dbReference>
<dbReference type="HPA" id="ENSG00000134058">
    <property type="expression patterns" value="Low tissue specificity"/>
</dbReference>
<dbReference type="MIM" id="601955">
    <property type="type" value="gene"/>
</dbReference>
<dbReference type="neXtProt" id="NX_P50613"/>
<dbReference type="OpenTargets" id="ENSG00000134058"/>
<dbReference type="PharmGKB" id="PA26314"/>
<dbReference type="VEuPathDB" id="HostDB:ENSG00000134058"/>
<dbReference type="eggNOG" id="KOG0659">
    <property type="taxonomic scope" value="Eukaryota"/>
</dbReference>
<dbReference type="GeneTree" id="ENSGT00940000155179"/>
<dbReference type="InParanoid" id="P50613"/>
<dbReference type="OMA" id="GIHHCHR"/>
<dbReference type="OrthoDB" id="1732493at2759"/>
<dbReference type="PAN-GO" id="P50613">
    <property type="GO annotations" value="7 GO annotations based on evolutionary models"/>
</dbReference>
<dbReference type="PhylomeDB" id="P50613"/>
<dbReference type="TreeFam" id="TF101024"/>
<dbReference type="BRENDA" id="2.7.11.22">
    <property type="organism ID" value="2681"/>
</dbReference>
<dbReference type="BRENDA" id="2.7.11.23">
    <property type="organism ID" value="2681"/>
</dbReference>
<dbReference type="PathwayCommons" id="P50613"/>
<dbReference type="Reactome" id="R-HSA-112382">
    <property type="pathway name" value="Formation of RNA Pol II elongation complex"/>
</dbReference>
<dbReference type="Reactome" id="R-HSA-113418">
    <property type="pathway name" value="Formation of the Early Elongation Complex"/>
</dbReference>
<dbReference type="Reactome" id="R-HSA-167152">
    <property type="pathway name" value="Formation of HIV elongation complex in the absence of HIV Tat"/>
</dbReference>
<dbReference type="Reactome" id="R-HSA-167158">
    <property type="pathway name" value="Formation of the HIV-1 Early Elongation Complex"/>
</dbReference>
<dbReference type="Reactome" id="R-HSA-167160">
    <property type="pathway name" value="RNA Pol II CTD phosphorylation and interaction with CE during HIV infection"/>
</dbReference>
<dbReference type="Reactome" id="R-HSA-167161">
    <property type="pathway name" value="HIV Transcription Initiation"/>
</dbReference>
<dbReference type="Reactome" id="R-HSA-167162">
    <property type="pathway name" value="RNA Polymerase II HIV Promoter Escape"/>
</dbReference>
<dbReference type="Reactome" id="R-HSA-167172">
    <property type="pathway name" value="Transcription of the HIV genome"/>
</dbReference>
<dbReference type="Reactome" id="R-HSA-167200">
    <property type="pathway name" value="Formation of HIV-1 elongation complex containing HIV-1 Tat"/>
</dbReference>
<dbReference type="Reactome" id="R-HSA-167246">
    <property type="pathway name" value="Tat-mediated elongation of the HIV-1 transcript"/>
</dbReference>
<dbReference type="Reactome" id="R-HSA-427413">
    <property type="pathway name" value="NoRC negatively regulates rRNA expression"/>
</dbReference>
<dbReference type="Reactome" id="R-HSA-5696395">
    <property type="pathway name" value="Formation of Incision Complex in GG-NER"/>
</dbReference>
<dbReference type="Reactome" id="R-HSA-674695">
    <property type="pathway name" value="RNA Polymerase II Pre-transcription Events"/>
</dbReference>
<dbReference type="Reactome" id="R-HSA-6781823">
    <property type="pathway name" value="Formation of TC-NER Pre-Incision Complex"/>
</dbReference>
<dbReference type="Reactome" id="R-HSA-6781827">
    <property type="pathway name" value="Transcription-Coupled Nucleotide Excision Repair (TC-NER)"/>
</dbReference>
<dbReference type="Reactome" id="R-HSA-6782135">
    <property type="pathway name" value="Dual incision in TC-NER"/>
</dbReference>
<dbReference type="Reactome" id="R-HSA-6782210">
    <property type="pathway name" value="Gap-filling DNA repair synthesis and ligation in TC-NER"/>
</dbReference>
<dbReference type="Reactome" id="R-HSA-6796648">
    <property type="pathway name" value="TP53 Regulates Transcription of DNA Repair Genes"/>
</dbReference>
<dbReference type="Reactome" id="R-HSA-6807505">
    <property type="pathway name" value="RNA polymerase II transcribes snRNA genes"/>
</dbReference>
<dbReference type="Reactome" id="R-HSA-69202">
    <property type="pathway name" value="Cyclin E associated events during G1/S transition"/>
</dbReference>
<dbReference type="Reactome" id="R-HSA-69231">
    <property type="pathway name" value="Cyclin D associated events in G1"/>
</dbReference>
<dbReference type="Reactome" id="R-HSA-69273">
    <property type="pathway name" value="Cyclin A/B1/B2 associated events during G2/M transition"/>
</dbReference>
<dbReference type="Reactome" id="R-HSA-69656">
    <property type="pathway name" value="Cyclin A:Cdk2-associated events at S phase entry"/>
</dbReference>
<dbReference type="Reactome" id="R-HSA-72086">
    <property type="pathway name" value="mRNA Capping"/>
</dbReference>
<dbReference type="Reactome" id="R-HSA-73762">
    <property type="pathway name" value="RNA Polymerase I Transcription Initiation"/>
</dbReference>
<dbReference type="Reactome" id="R-HSA-73772">
    <property type="pathway name" value="RNA Polymerase I Promoter Escape"/>
</dbReference>
<dbReference type="Reactome" id="R-HSA-73776">
    <property type="pathway name" value="RNA Polymerase II Promoter Escape"/>
</dbReference>
<dbReference type="Reactome" id="R-HSA-73779">
    <property type="pathway name" value="RNA Polymerase II Transcription Pre-Initiation And Promoter Opening"/>
</dbReference>
<dbReference type="Reactome" id="R-HSA-73863">
    <property type="pathway name" value="RNA Polymerase I Transcription Termination"/>
</dbReference>
<dbReference type="Reactome" id="R-HSA-75953">
    <property type="pathway name" value="RNA Polymerase II Transcription Initiation"/>
</dbReference>
<dbReference type="Reactome" id="R-HSA-75955">
    <property type="pathway name" value="RNA Polymerase II Transcription Elongation"/>
</dbReference>
<dbReference type="Reactome" id="R-HSA-76042">
    <property type="pathway name" value="RNA Polymerase II Transcription Initiation And Promoter Clearance"/>
</dbReference>
<dbReference type="Reactome" id="R-HSA-77075">
    <property type="pathway name" value="RNA Pol II CTD phosphorylation and interaction with CE"/>
</dbReference>
<dbReference type="Reactome" id="R-HSA-8939236">
    <property type="pathway name" value="RUNX1 regulates transcription of genes involved in differentiation of HSCs"/>
</dbReference>
<dbReference type="SignaLink" id="P50613"/>
<dbReference type="SIGNOR" id="P50613"/>
<dbReference type="BioGRID-ORCS" id="1022">
    <property type="hits" value="758 hits in 1195 CRISPR screens"/>
</dbReference>
<dbReference type="CD-CODE" id="804901D1">
    <property type="entry name" value="Nuclear speckle"/>
</dbReference>
<dbReference type="CD-CODE" id="91857CE7">
    <property type="entry name" value="Nucleolus"/>
</dbReference>
<dbReference type="ChiTaRS" id="CDK7">
    <property type="organism name" value="human"/>
</dbReference>
<dbReference type="EvolutionaryTrace" id="P50613"/>
<dbReference type="GeneWiki" id="Cyclin-dependent_kinase_7"/>
<dbReference type="GenomeRNAi" id="1022"/>
<dbReference type="Pharos" id="P50613">
    <property type="development level" value="Tchem"/>
</dbReference>
<dbReference type="PRO" id="PR:P50613"/>
<dbReference type="Proteomes" id="UP000005640">
    <property type="component" value="Chromosome 5"/>
</dbReference>
<dbReference type="RNAct" id="P50613">
    <property type="molecule type" value="protein"/>
</dbReference>
<dbReference type="Bgee" id="ENSG00000134058">
    <property type="expression patterns" value="Expressed in placenta and 102 other cell types or tissues"/>
</dbReference>
<dbReference type="ExpressionAtlas" id="P50613">
    <property type="expression patterns" value="baseline and differential"/>
</dbReference>
<dbReference type="GO" id="GO:0070516">
    <property type="term" value="C:CAK-ERCC2 complex"/>
    <property type="evidence" value="ECO:0000314"/>
    <property type="project" value="UniProtKB"/>
</dbReference>
<dbReference type="GO" id="GO:0000307">
    <property type="term" value="C:cyclin-dependent protein kinase holoenzyme complex"/>
    <property type="evidence" value="ECO:0000314"/>
    <property type="project" value="ComplexPortal"/>
</dbReference>
<dbReference type="GO" id="GO:0005737">
    <property type="term" value="C:cytoplasm"/>
    <property type="evidence" value="ECO:0000318"/>
    <property type="project" value="GO_Central"/>
</dbReference>
<dbReference type="GO" id="GO:0005829">
    <property type="term" value="C:cytosol"/>
    <property type="evidence" value="ECO:0000314"/>
    <property type="project" value="HPA"/>
</dbReference>
<dbReference type="GO" id="GO:0001650">
    <property type="term" value="C:fibrillar center"/>
    <property type="evidence" value="ECO:0000314"/>
    <property type="project" value="HPA"/>
</dbReference>
<dbReference type="GO" id="GO:0001673">
    <property type="term" value="C:male germ cell nucleus"/>
    <property type="evidence" value="ECO:0007669"/>
    <property type="project" value="Ensembl"/>
</dbReference>
<dbReference type="GO" id="GO:0005654">
    <property type="term" value="C:nucleoplasm"/>
    <property type="evidence" value="ECO:0000314"/>
    <property type="project" value="HPA"/>
</dbReference>
<dbReference type="GO" id="GO:0005634">
    <property type="term" value="C:nucleus"/>
    <property type="evidence" value="ECO:0000314"/>
    <property type="project" value="UniProtKB"/>
</dbReference>
<dbReference type="GO" id="GO:0048471">
    <property type="term" value="C:perinuclear region of cytoplasm"/>
    <property type="evidence" value="ECO:0007669"/>
    <property type="project" value="UniProtKB-SubCell"/>
</dbReference>
<dbReference type="GO" id="GO:0005886">
    <property type="term" value="C:plasma membrane"/>
    <property type="evidence" value="ECO:0000314"/>
    <property type="project" value="HPA"/>
</dbReference>
<dbReference type="GO" id="GO:0000439">
    <property type="term" value="C:transcription factor TFIIH core complex"/>
    <property type="evidence" value="ECO:0000314"/>
    <property type="project" value="UniProtKB"/>
</dbReference>
<dbReference type="GO" id="GO:0005675">
    <property type="term" value="C:transcription factor TFIIH holo complex"/>
    <property type="evidence" value="ECO:0000314"/>
    <property type="project" value="UniProtKB"/>
</dbReference>
<dbReference type="GO" id="GO:0070985">
    <property type="term" value="C:transcription factor TFIIK complex"/>
    <property type="evidence" value="ECO:0000314"/>
    <property type="project" value="UniProtKB"/>
</dbReference>
<dbReference type="GO" id="GO:0005524">
    <property type="term" value="F:ATP binding"/>
    <property type="evidence" value="ECO:0007669"/>
    <property type="project" value="UniProtKB-KW"/>
</dbReference>
<dbReference type="GO" id="GO:0008094">
    <property type="term" value="F:ATP-dependent activity, acting on DNA"/>
    <property type="evidence" value="ECO:0000314"/>
    <property type="project" value="UniProtKB"/>
</dbReference>
<dbReference type="GO" id="GO:0004693">
    <property type="term" value="F:cyclin-dependent protein serine/threonine kinase activity"/>
    <property type="evidence" value="ECO:0000318"/>
    <property type="project" value="GO_Central"/>
</dbReference>
<dbReference type="GO" id="GO:0004672">
    <property type="term" value="F:protein kinase activity"/>
    <property type="evidence" value="ECO:0000304"/>
    <property type="project" value="ProtInc"/>
</dbReference>
<dbReference type="GO" id="GO:0106310">
    <property type="term" value="F:protein serine kinase activity"/>
    <property type="evidence" value="ECO:0007669"/>
    <property type="project" value="RHEA"/>
</dbReference>
<dbReference type="GO" id="GO:0004674">
    <property type="term" value="F:protein serine/threonine kinase activity"/>
    <property type="evidence" value="ECO:0000304"/>
    <property type="project" value="Reactome"/>
</dbReference>
<dbReference type="GO" id="GO:0008353">
    <property type="term" value="F:RNA polymerase II CTD heptapeptide repeat kinase activity"/>
    <property type="evidence" value="ECO:0000314"/>
    <property type="project" value="UniProtKB"/>
</dbReference>
<dbReference type="GO" id="GO:0140836">
    <property type="term" value="F:RNA polymerase II CTD heptapeptide repeat S5 kinase activity"/>
    <property type="evidence" value="ECO:0000314"/>
    <property type="project" value="UniProtKB"/>
</dbReference>
<dbReference type="GO" id="GO:0051301">
    <property type="term" value="P:cell division"/>
    <property type="evidence" value="ECO:0007669"/>
    <property type="project" value="UniProtKB-KW"/>
</dbReference>
<dbReference type="GO" id="GO:0006281">
    <property type="term" value="P:DNA repair"/>
    <property type="evidence" value="ECO:0007669"/>
    <property type="project" value="UniProtKB-KW"/>
</dbReference>
<dbReference type="GO" id="GO:0045944">
    <property type="term" value="P:positive regulation of transcription by RNA polymerase II"/>
    <property type="evidence" value="ECO:0000314"/>
    <property type="project" value="UniProtKB"/>
</dbReference>
<dbReference type="GO" id="GO:0050821">
    <property type="term" value="P:protein stabilization"/>
    <property type="evidence" value="ECO:0000315"/>
    <property type="project" value="CAFA"/>
</dbReference>
<dbReference type="GO" id="GO:0051726">
    <property type="term" value="P:regulation of cell cycle"/>
    <property type="evidence" value="ECO:0000318"/>
    <property type="project" value="GO_Central"/>
</dbReference>
<dbReference type="GO" id="GO:2000045">
    <property type="term" value="P:regulation of G1/S transition of mitotic cell cycle"/>
    <property type="evidence" value="ECO:0000314"/>
    <property type="project" value="ComplexPortal"/>
</dbReference>
<dbReference type="GO" id="GO:0042795">
    <property type="term" value="P:snRNA transcription by RNA polymerase II"/>
    <property type="evidence" value="ECO:0000304"/>
    <property type="project" value="Reactome"/>
</dbReference>
<dbReference type="GO" id="GO:0006366">
    <property type="term" value="P:transcription by RNA polymerase II"/>
    <property type="evidence" value="ECO:0000304"/>
    <property type="project" value="Reactome"/>
</dbReference>
<dbReference type="GO" id="GO:0006367">
    <property type="term" value="P:transcription initiation at RNA polymerase II promoter"/>
    <property type="evidence" value="ECO:0000314"/>
    <property type="project" value="UniProtKB"/>
</dbReference>
<dbReference type="CDD" id="cd07841">
    <property type="entry name" value="STKc_CDK7"/>
    <property type="match status" value="1"/>
</dbReference>
<dbReference type="FunFam" id="1.10.510.10:FF:000097">
    <property type="entry name" value="Putative cyclin-dependent kinase 7"/>
    <property type="match status" value="1"/>
</dbReference>
<dbReference type="FunFam" id="3.30.200.20:FF:000190">
    <property type="entry name" value="Putative cyclin-dependent kinase 7"/>
    <property type="match status" value="1"/>
</dbReference>
<dbReference type="Gene3D" id="3.30.200.20">
    <property type="entry name" value="Phosphorylase Kinase, domain 1"/>
    <property type="match status" value="1"/>
</dbReference>
<dbReference type="Gene3D" id="1.10.510.10">
    <property type="entry name" value="Transferase(Phosphotransferase) domain 1"/>
    <property type="match status" value="1"/>
</dbReference>
<dbReference type="IDEAL" id="IID00716"/>
<dbReference type="InterPro" id="IPR050108">
    <property type="entry name" value="CDK"/>
</dbReference>
<dbReference type="InterPro" id="IPR037770">
    <property type="entry name" value="CDK7"/>
</dbReference>
<dbReference type="InterPro" id="IPR011009">
    <property type="entry name" value="Kinase-like_dom_sf"/>
</dbReference>
<dbReference type="InterPro" id="IPR000719">
    <property type="entry name" value="Prot_kinase_dom"/>
</dbReference>
<dbReference type="InterPro" id="IPR017441">
    <property type="entry name" value="Protein_kinase_ATP_BS"/>
</dbReference>
<dbReference type="InterPro" id="IPR008271">
    <property type="entry name" value="Ser/Thr_kinase_AS"/>
</dbReference>
<dbReference type="PANTHER" id="PTHR24056">
    <property type="entry name" value="CELL DIVISION PROTEIN KINASE"/>
    <property type="match status" value="1"/>
</dbReference>
<dbReference type="PANTHER" id="PTHR24056:SF0">
    <property type="entry name" value="CYCLIN-DEPENDENT KINASE 7"/>
    <property type="match status" value="1"/>
</dbReference>
<dbReference type="Pfam" id="PF00069">
    <property type="entry name" value="Pkinase"/>
    <property type="match status" value="1"/>
</dbReference>
<dbReference type="SMART" id="SM00220">
    <property type="entry name" value="S_TKc"/>
    <property type="match status" value="1"/>
</dbReference>
<dbReference type="SUPFAM" id="SSF56112">
    <property type="entry name" value="Protein kinase-like (PK-like)"/>
    <property type="match status" value="1"/>
</dbReference>
<dbReference type="PROSITE" id="PS00107">
    <property type="entry name" value="PROTEIN_KINASE_ATP"/>
    <property type="match status" value="1"/>
</dbReference>
<dbReference type="PROSITE" id="PS50011">
    <property type="entry name" value="PROTEIN_KINASE_DOM"/>
    <property type="match status" value="1"/>
</dbReference>
<dbReference type="PROSITE" id="PS00108">
    <property type="entry name" value="PROTEIN_KINASE_ST"/>
    <property type="match status" value="1"/>
</dbReference>
<protein>
    <recommendedName>
        <fullName>Cyclin-dependent kinase 7</fullName>
        <ecNumber evidence="20 24 26">2.7.11.22</ecNumber>
        <ecNumber evidence="21 22 27">2.7.11.23</ecNumber>
    </recommendedName>
    <alternativeName>
        <fullName>39 kDa protein kinase</fullName>
        <shortName>p39 Mo15</shortName>
    </alternativeName>
    <alternativeName>
        <fullName>CDK-activating kinase 1</fullName>
    </alternativeName>
    <alternativeName>
        <fullName>Cell division protein kinase 7</fullName>
    </alternativeName>
    <alternativeName>
        <fullName>Serine/threonine-protein kinase 1</fullName>
    </alternativeName>
    <alternativeName>
        <fullName>TFIIH basal transcription factor complex kinase subunit</fullName>
    </alternativeName>
</protein>
<organism>
    <name type="scientific">Homo sapiens</name>
    <name type="common">Human</name>
    <dbReference type="NCBI Taxonomy" id="9606"/>
    <lineage>
        <taxon>Eukaryota</taxon>
        <taxon>Metazoa</taxon>
        <taxon>Chordata</taxon>
        <taxon>Craniata</taxon>
        <taxon>Vertebrata</taxon>
        <taxon>Euteleostomi</taxon>
        <taxon>Mammalia</taxon>
        <taxon>Eutheria</taxon>
        <taxon>Euarchontoglires</taxon>
        <taxon>Primates</taxon>
        <taxon>Haplorrhini</taxon>
        <taxon>Catarrhini</taxon>
        <taxon>Hominidae</taxon>
        <taxon>Homo</taxon>
    </lineage>
</organism>
<gene>
    <name type="primary">CDK7</name>
    <name type="synonym">CAK</name>
    <name type="synonym">CAK1</name>
    <name type="synonym">CDKN7</name>
    <name type="synonym">MO15</name>
    <name type="synonym">STK1</name>
</gene>